<gene>
    <name type="primary">OPG079</name>
    <name type="ORF">I3L</name>
</gene>
<reference key="1">
    <citation type="journal article" date="1990" name="Virology">
        <title>The complete DNA sequence of vaccinia virus.</title>
        <authorList>
            <person name="Goebel S.J."/>
            <person name="Johnson G.P."/>
            <person name="Perkus M.E."/>
            <person name="Davis S.W."/>
            <person name="Winslow J.P."/>
            <person name="Paoletti E."/>
        </authorList>
    </citation>
    <scope>NUCLEOTIDE SEQUENCE [LARGE SCALE GENOMIC DNA]</scope>
</reference>
<reference key="2">
    <citation type="journal article" date="1990" name="Virology">
        <title>Appendix to 'The complete DNA sequence of vaccinia virus'.</title>
        <authorList>
            <person name="Goebel S.J."/>
            <person name="Johnson G.P."/>
            <person name="Perkus M.E."/>
            <person name="Davis S.W."/>
            <person name="Winslow J.P."/>
            <person name="Paoletti E."/>
        </authorList>
    </citation>
    <scope>NUCLEOTIDE SEQUENCE [LARGE SCALE GENOMIC DNA]</scope>
</reference>
<evidence type="ECO:0000250" key="1">
    <source>
        <dbReference type="UniProtKB" id="P12923"/>
    </source>
</evidence>
<evidence type="ECO:0000305" key="2"/>
<dbReference type="EMBL" id="M35027">
    <property type="protein sequence ID" value="AAA48058.1"/>
    <property type="molecule type" value="Genomic_DNA"/>
</dbReference>
<dbReference type="Proteomes" id="UP000008269">
    <property type="component" value="Segment"/>
</dbReference>
<dbReference type="GO" id="GO:0030430">
    <property type="term" value="C:host cell cytoplasm"/>
    <property type="evidence" value="ECO:0007669"/>
    <property type="project" value="UniProtKB-SubCell"/>
</dbReference>
<dbReference type="GO" id="GO:0003697">
    <property type="term" value="F:single-stranded DNA binding"/>
    <property type="evidence" value="ECO:0007669"/>
    <property type="project" value="InterPro"/>
</dbReference>
<dbReference type="GO" id="GO:0030261">
    <property type="term" value="P:chromosome condensation"/>
    <property type="evidence" value="ECO:0007669"/>
    <property type="project" value="UniProtKB-KW"/>
</dbReference>
<dbReference type="InterPro" id="IPR006754">
    <property type="entry name" value="Poxvirus_I3_ssDNA-bd"/>
</dbReference>
<dbReference type="Pfam" id="PF04661">
    <property type="entry name" value="Pox_I3"/>
    <property type="match status" value="1"/>
</dbReference>
<dbReference type="PIRSF" id="PIRSF003767">
    <property type="entry name" value="VAC_I3L"/>
    <property type="match status" value="1"/>
</dbReference>
<protein>
    <recommendedName>
        <fullName>Protein OPG079</fullName>
    </recommendedName>
    <alternativeName>
        <fullName>Protein I3</fullName>
    </alternativeName>
</protein>
<comment type="function">
    <text evidence="1">Plays an essential role in viral DNA replication. Binds to ssDNA with high affinity and localizes to cytoplasmic factories where nascent viral genomes accumulate. May disrupt loops, hairpins and other secondary structures present on ssDNA to reduce and eliminate pausing of viral DNA polymerase at specific sites during elongation.</text>
</comment>
<comment type="subunit">
    <text evidence="1">Homoomultimer (Potential). Interacts with the small subunit of ribonucleotide reductase (By similarity). Interacts with host FAM111A; this interaction protomtes OPG079 degradation through autophagy (By similarity).</text>
</comment>
<comment type="subcellular location">
    <subcellularLocation>
        <location evidence="1">Host cytoplasm</location>
    </subcellularLocation>
    <text evidence="1">Localizes in cytoplasmic virus factories, where it is associated with viral DNA.</text>
</comment>
<comment type="induction">
    <text evidence="1">Expressed in the early phase of the viral replicative cycle.</text>
</comment>
<comment type="miscellaneous">
    <text>This protein is synthesized in the early as well as at the intermediate time of infection.</text>
</comment>
<comment type="similarity">
    <text evidence="2">Belongs to the orthopoxvirus OPG079 family.</text>
</comment>
<sequence>MSKVIKKRVETSPRPTASSDSLQTCAGVIEYAKSISKSNAKCIEYVTLNASQYANCSSISIKLTDSLSSQMTSTFIMLEGETKLYKNKSKQDRSDGYFLKIKVTAASPMLYQLLEAVYGNIKHKERIPNSLHSLSVETITEKTFKDESIFINKLNGAMVEYVSAGESSILRSIEGELESLSKRERQLAKAIITPIVFYRSGTETKITFALKKLIIDREVVANVIGLSGDSERVSMTENVEEDLARNLGLVDIDDEYDEDSDKEKPIFNV</sequence>
<accession>P20499</accession>
<proteinExistence type="inferred from homology"/>
<organism>
    <name type="scientific">Vaccinia virus (strain Copenhagen)</name>
    <name type="common">VACV</name>
    <dbReference type="NCBI Taxonomy" id="10249"/>
    <lineage>
        <taxon>Viruses</taxon>
        <taxon>Varidnaviria</taxon>
        <taxon>Bamfordvirae</taxon>
        <taxon>Nucleocytoviricota</taxon>
        <taxon>Pokkesviricetes</taxon>
        <taxon>Chitovirales</taxon>
        <taxon>Poxviridae</taxon>
        <taxon>Chordopoxvirinae</taxon>
        <taxon>Orthopoxvirus</taxon>
        <taxon>Vaccinia virus</taxon>
    </lineage>
</organism>
<feature type="chain" id="PRO_0000099571" description="Protein OPG079">
    <location>
        <begin position="1"/>
        <end position="269"/>
    </location>
</feature>
<organismHost>
    <name type="scientific">Homo sapiens</name>
    <name type="common">Human</name>
    <dbReference type="NCBI Taxonomy" id="9606"/>
</organismHost>
<name>PG079_VACCC</name>
<keyword id="KW-0226">DNA condensation</keyword>
<keyword id="KW-0238">DNA-binding</keyword>
<keyword id="KW-0244">Early protein</keyword>
<keyword id="KW-1035">Host cytoplasm</keyword>
<keyword id="KW-1185">Reference proteome</keyword>